<evidence type="ECO:0000255" key="1">
    <source>
        <dbReference type="HAMAP-Rule" id="MF_00268"/>
    </source>
</evidence>
<accession>Q111E0</accession>
<reference key="1">
    <citation type="journal article" date="2015" name="Proc. Natl. Acad. Sci. U.S.A.">
        <title>Trichodesmium genome maintains abundant, widespread noncoding DNA in situ, despite oligotrophic lifestyle.</title>
        <authorList>
            <person name="Walworth N."/>
            <person name="Pfreundt U."/>
            <person name="Nelson W.C."/>
            <person name="Mincer T."/>
            <person name="Heidelberg J.F."/>
            <person name="Fu F."/>
            <person name="Waterbury J.B."/>
            <person name="Glavina del Rio T."/>
            <person name="Goodwin L."/>
            <person name="Kyrpides N.C."/>
            <person name="Land M.L."/>
            <person name="Woyke T."/>
            <person name="Hutchins D.A."/>
            <person name="Hess W.R."/>
            <person name="Webb E.A."/>
        </authorList>
    </citation>
    <scope>NUCLEOTIDE SEQUENCE [LARGE SCALE GENOMIC DNA]</scope>
    <source>
        <strain>IMS101</strain>
    </source>
</reference>
<comment type="function">
    <text evidence="1">Can catalyze the hydrolysis of ATP in the presence of single-stranded DNA, the ATP-dependent uptake of single-stranded DNA by duplex DNA, and the ATP-dependent hybridization of homologous single-stranded DNAs. It interacts with LexA causing its activation and leading to its autocatalytic cleavage.</text>
</comment>
<comment type="subcellular location">
    <subcellularLocation>
        <location evidence="1">Cytoplasm</location>
    </subcellularLocation>
</comment>
<comment type="similarity">
    <text evidence="1">Belongs to the RecA family.</text>
</comment>
<feature type="chain" id="PRO_1000048031" description="Protein RecA">
    <location>
        <begin position="1"/>
        <end position="360"/>
    </location>
</feature>
<feature type="binding site" evidence="1">
    <location>
        <begin position="69"/>
        <end position="76"/>
    </location>
    <ligand>
        <name>ATP</name>
        <dbReference type="ChEBI" id="CHEBI:30616"/>
    </ligand>
</feature>
<gene>
    <name evidence="1" type="primary">recA</name>
    <name type="ordered locus">Tery_2695</name>
</gene>
<keyword id="KW-0067">ATP-binding</keyword>
<keyword id="KW-0963">Cytoplasm</keyword>
<keyword id="KW-0227">DNA damage</keyword>
<keyword id="KW-0233">DNA recombination</keyword>
<keyword id="KW-0234">DNA repair</keyword>
<keyword id="KW-0238">DNA-binding</keyword>
<keyword id="KW-0547">Nucleotide-binding</keyword>
<keyword id="KW-0742">SOS response</keyword>
<protein>
    <recommendedName>
        <fullName evidence="1">Protein RecA</fullName>
    </recommendedName>
    <alternativeName>
        <fullName evidence="1">Recombinase A</fullName>
    </alternativeName>
</protein>
<name>RECA_TRIEI</name>
<proteinExistence type="inferred from homology"/>
<sequence length="360" mass="38723">MASATDNKEKQKALDSVLKTIEKTFGKGSIVRLGDATRMKVETISSGALTLDLALGGGLPKGRVIEIYGPESSGKTTLALHAIAETQKSGGIAAFVDAEHALDPTYAAALGVDIENLLVSQPDTGEMALEVVDHLVRSVAVDIVVVDSVAALVPRAEIEGDMGDSHMGLQARLMSQALRKITGNIGKSGCTVVFLNQLRQKIGVVYGNPETTTGGNALKFYASVRLDIRRTQTLKKSSEEYGIHAKVKVAKNKVAPPFRVAEFDIIFGKGISNVGCIIDLAEETDVIKRKGAWYSYQGSNFAQGREKAIAYMESNIDFAKKIEKQVRDHLSQGALVSANSVARVDEIEEDEDEDEALEEE</sequence>
<organism>
    <name type="scientific">Trichodesmium erythraeum (strain IMS101)</name>
    <dbReference type="NCBI Taxonomy" id="203124"/>
    <lineage>
        <taxon>Bacteria</taxon>
        <taxon>Bacillati</taxon>
        <taxon>Cyanobacteriota</taxon>
        <taxon>Cyanophyceae</taxon>
        <taxon>Oscillatoriophycideae</taxon>
        <taxon>Oscillatoriales</taxon>
        <taxon>Microcoleaceae</taxon>
        <taxon>Trichodesmium</taxon>
    </lineage>
</organism>
<dbReference type="EMBL" id="CP000393">
    <property type="protein sequence ID" value="ABG51884.1"/>
    <property type="molecule type" value="Genomic_DNA"/>
</dbReference>
<dbReference type="RefSeq" id="WP_011612246.1">
    <property type="nucleotide sequence ID" value="NC_008312.1"/>
</dbReference>
<dbReference type="SMR" id="Q111E0"/>
<dbReference type="STRING" id="203124.Tery_2695"/>
<dbReference type="KEGG" id="ter:Tery_2695"/>
<dbReference type="eggNOG" id="COG0468">
    <property type="taxonomic scope" value="Bacteria"/>
</dbReference>
<dbReference type="HOGENOM" id="CLU_040469_3_2_3"/>
<dbReference type="OrthoDB" id="9776733at2"/>
<dbReference type="GO" id="GO:0005829">
    <property type="term" value="C:cytosol"/>
    <property type="evidence" value="ECO:0007669"/>
    <property type="project" value="TreeGrafter"/>
</dbReference>
<dbReference type="GO" id="GO:0005524">
    <property type="term" value="F:ATP binding"/>
    <property type="evidence" value="ECO:0007669"/>
    <property type="project" value="UniProtKB-UniRule"/>
</dbReference>
<dbReference type="GO" id="GO:0016887">
    <property type="term" value="F:ATP hydrolysis activity"/>
    <property type="evidence" value="ECO:0007669"/>
    <property type="project" value="InterPro"/>
</dbReference>
<dbReference type="GO" id="GO:0140664">
    <property type="term" value="F:ATP-dependent DNA damage sensor activity"/>
    <property type="evidence" value="ECO:0007669"/>
    <property type="project" value="InterPro"/>
</dbReference>
<dbReference type="GO" id="GO:0003684">
    <property type="term" value="F:damaged DNA binding"/>
    <property type="evidence" value="ECO:0007669"/>
    <property type="project" value="UniProtKB-UniRule"/>
</dbReference>
<dbReference type="GO" id="GO:0003697">
    <property type="term" value="F:single-stranded DNA binding"/>
    <property type="evidence" value="ECO:0007669"/>
    <property type="project" value="UniProtKB-UniRule"/>
</dbReference>
<dbReference type="GO" id="GO:0006310">
    <property type="term" value="P:DNA recombination"/>
    <property type="evidence" value="ECO:0007669"/>
    <property type="project" value="UniProtKB-UniRule"/>
</dbReference>
<dbReference type="GO" id="GO:0006281">
    <property type="term" value="P:DNA repair"/>
    <property type="evidence" value="ECO:0007669"/>
    <property type="project" value="UniProtKB-UniRule"/>
</dbReference>
<dbReference type="GO" id="GO:0009432">
    <property type="term" value="P:SOS response"/>
    <property type="evidence" value="ECO:0007669"/>
    <property type="project" value="UniProtKB-UniRule"/>
</dbReference>
<dbReference type="CDD" id="cd00983">
    <property type="entry name" value="RecA"/>
    <property type="match status" value="1"/>
</dbReference>
<dbReference type="FunFam" id="3.40.50.300:FF:000087">
    <property type="entry name" value="Recombinase RecA"/>
    <property type="match status" value="1"/>
</dbReference>
<dbReference type="Gene3D" id="3.40.50.300">
    <property type="entry name" value="P-loop containing nucleotide triphosphate hydrolases"/>
    <property type="match status" value="1"/>
</dbReference>
<dbReference type="HAMAP" id="MF_00268">
    <property type="entry name" value="RecA"/>
    <property type="match status" value="1"/>
</dbReference>
<dbReference type="InterPro" id="IPR003593">
    <property type="entry name" value="AAA+_ATPase"/>
</dbReference>
<dbReference type="InterPro" id="IPR013765">
    <property type="entry name" value="DNA_recomb/repair_RecA"/>
</dbReference>
<dbReference type="InterPro" id="IPR020584">
    <property type="entry name" value="DNA_recomb/repair_RecA_CS"/>
</dbReference>
<dbReference type="InterPro" id="IPR027417">
    <property type="entry name" value="P-loop_NTPase"/>
</dbReference>
<dbReference type="InterPro" id="IPR049261">
    <property type="entry name" value="RecA-like_C"/>
</dbReference>
<dbReference type="InterPro" id="IPR049428">
    <property type="entry name" value="RecA-like_N"/>
</dbReference>
<dbReference type="InterPro" id="IPR020588">
    <property type="entry name" value="RecA_ATP-bd"/>
</dbReference>
<dbReference type="InterPro" id="IPR023400">
    <property type="entry name" value="RecA_C_sf"/>
</dbReference>
<dbReference type="InterPro" id="IPR020587">
    <property type="entry name" value="RecA_monomer-monomer_interface"/>
</dbReference>
<dbReference type="NCBIfam" id="TIGR02012">
    <property type="entry name" value="tigrfam_recA"/>
    <property type="match status" value="1"/>
</dbReference>
<dbReference type="PANTHER" id="PTHR45900:SF1">
    <property type="entry name" value="MITOCHONDRIAL DNA REPAIR PROTEIN RECA HOMOLOG-RELATED"/>
    <property type="match status" value="1"/>
</dbReference>
<dbReference type="PANTHER" id="PTHR45900">
    <property type="entry name" value="RECA"/>
    <property type="match status" value="1"/>
</dbReference>
<dbReference type="Pfam" id="PF00154">
    <property type="entry name" value="RecA"/>
    <property type="match status" value="1"/>
</dbReference>
<dbReference type="Pfam" id="PF21096">
    <property type="entry name" value="RecA_C"/>
    <property type="match status" value="1"/>
</dbReference>
<dbReference type="PRINTS" id="PR00142">
    <property type="entry name" value="RECA"/>
</dbReference>
<dbReference type="SMART" id="SM00382">
    <property type="entry name" value="AAA"/>
    <property type="match status" value="1"/>
</dbReference>
<dbReference type="SUPFAM" id="SSF52540">
    <property type="entry name" value="P-loop containing nucleoside triphosphate hydrolases"/>
    <property type="match status" value="1"/>
</dbReference>
<dbReference type="SUPFAM" id="SSF54752">
    <property type="entry name" value="RecA protein, C-terminal domain"/>
    <property type="match status" value="1"/>
</dbReference>
<dbReference type="PROSITE" id="PS00321">
    <property type="entry name" value="RECA_1"/>
    <property type="match status" value="1"/>
</dbReference>
<dbReference type="PROSITE" id="PS50162">
    <property type="entry name" value="RECA_2"/>
    <property type="match status" value="1"/>
</dbReference>
<dbReference type="PROSITE" id="PS50163">
    <property type="entry name" value="RECA_3"/>
    <property type="match status" value="1"/>
</dbReference>